<organism>
    <name type="scientific">Chlamydia caviae (strain ATCC VR-813 / DSM 19441 / 03DC25 / GPIC)</name>
    <name type="common">Chlamydophila caviae</name>
    <dbReference type="NCBI Taxonomy" id="227941"/>
    <lineage>
        <taxon>Bacteria</taxon>
        <taxon>Pseudomonadati</taxon>
        <taxon>Chlamydiota</taxon>
        <taxon>Chlamydiia</taxon>
        <taxon>Chlamydiales</taxon>
        <taxon>Chlamydiaceae</taxon>
        <taxon>Chlamydia/Chlamydophila group</taxon>
        <taxon>Chlamydia</taxon>
    </lineage>
</organism>
<keyword id="KW-0001">2Fe-2S</keyword>
<keyword id="KW-0997">Cell inner membrane</keyword>
<keyword id="KW-1003">Cell membrane</keyword>
<keyword id="KW-0274">FAD</keyword>
<keyword id="KW-0285">Flavoprotein</keyword>
<keyword id="KW-0406">Ion transport</keyword>
<keyword id="KW-0408">Iron</keyword>
<keyword id="KW-0411">Iron-sulfur</keyword>
<keyword id="KW-0472">Membrane</keyword>
<keyword id="KW-0479">Metal-binding</keyword>
<keyword id="KW-0520">NAD</keyword>
<keyword id="KW-0915">Sodium</keyword>
<keyword id="KW-0739">Sodium transport</keyword>
<keyword id="KW-1278">Translocase</keyword>
<keyword id="KW-0812">Transmembrane</keyword>
<keyword id="KW-1133">Transmembrane helix</keyword>
<keyword id="KW-0813">Transport</keyword>
<keyword id="KW-0830">Ubiquinone</keyword>
<name>NQRF_CHLCV</name>
<gene>
    <name evidence="1" type="primary">nqrF</name>
    <name type="ordered locus">CCA_00885</name>
</gene>
<sequence>MTWLSGLYFISIASLVFCVIGLILSGIILISRKFLVKTHACKLKINDDDSLTKTVDSGRTLLSSLLDSGIPIPSPCGGKATCKQCKVKIVKNADQPLETDRATFSKQQLEQGWRLSCQTKVQHDMCLEIEERYLNASSWEGTVVSNDNVATFIKELVVSVSPEHPIPYKPGGYLQIRVPPYKTNTSDWKQTMAPEYYSDWEHFNLFDRTIDNSLLELDSANKAYSLASYPAELPVIKFNIRIATPPFINNAPNPEIPWGICSSYIFSLKPGDKITVSGPYGESFMKENNRPLIFLIGGAGSSFGRSHILDLLLNKHSTRDITLWYGARSLKENIYQEEYEKLEKDFSNFHYHLVLSEPLPEDIDSGWDKNDPEKTNFLFRAFELGQLSKLSNPEDYLYYVCGPPLHNSSILKLLDNYGVERSSIILDDFGS</sequence>
<evidence type="ECO:0000255" key="1">
    <source>
        <dbReference type="HAMAP-Rule" id="MF_00430"/>
    </source>
</evidence>
<feature type="chain" id="PRO_0000074489" description="Na(+)-translocating NADH-quinone reductase subunit F">
    <location>
        <begin position="1"/>
        <end position="431"/>
    </location>
</feature>
<feature type="transmembrane region" description="Helical" evidence="1">
    <location>
        <begin position="10"/>
        <end position="30"/>
    </location>
</feature>
<feature type="domain" description="2Fe-2S ferredoxin-type" evidence="1">
    <location>
        <begin position="41"/>
        <end position="133"/>
    </location>
</feature>
<feature type="domain" description="FAD-binding FR-type" evidence="1">
    <location>
        <begin position="136"/>
        <end position="286"/>
    </location>
</feature>
<feature type="binding site" evidence="1">
    <location>
        <position position="76"/>
    </location>
    <ligand>
        <name>[2Fe-2S] cluster</name>
        <dbReference type="ChEBI" id="CHEBI:190135"/>
    </ligand>
</feature>
<feature type="binding site" evidence="1">
    <location>
        <position position="82"/>
    </location>
    <ligand>
        <name>[2Fe-2S] cluster</name>
        <dbReference type="ChEBI" id="CHEBI:190135"/>
    </ligand>
</feature>
<feature type="binding site" evidence="1">
    <location>
        <position position="85"/>
    </location>
    <ligand>
        <name>[2Fe-2S] cluster</name>
        <dbReference type="ChEBI" id="CHEBI:190135"/>
    </ligand>
</feature>
<feature type="binding site" evidence="1">
    <location>
        <position position="117"/>
    </location>
    <ligand>
        <name>[2Fe-2S] cluster</name>
        <dbReference type="ChEBI" id="CHEBI:190135"/>
    </ligand>
</feature>
<accession>Q821Q3</accession>
<proteinExistence type="inferred from homology"/>
<dbReference type="EC" id="7.2.1.1" evidence="1"/>
<dbReference type="EMBL" id="AE015925">
    <property type="protein sequence ID" value="AAP05626.1"/>
    <property type="molecule type" value="Genomic_DNA"/>
</dbReference>
<dbReference type="RefSeq" id="WP_011006840.1">
    <property type="nucleotide sequence ID" value="NC_003361.3"/>
</dbReference>
<dbReference type="SMR" id="Q821Q3"/>
<dbReference type="STRING" id="227941.CCA_00885"/>
<dbReference type="KEGG" id="cca:CCA_00885"/>
<dbReference type="eggNOG" id="COG2871">
    <property type="taxonomic scope" value="Bacteria"/>
</dbReference>
<dbReference type="HOGENOM" id="CLU_003827_7_2_0"/>
<dbReference type="OrthoDB" id="9796486at2"/>
<dbReference type="Proteomes" id="UP000002193">
    <property type="component" value="Chromosome"/>
</dbReference>
<dbReference type="GO" id="GO:0005886">
    <property type="term" value="C:plasma membrane"/>
    <property type="evidence" value="ECO:0007669"/>
    <property type="project" value="UniProtKB-SubCell"/>
</dbReference>
<dbReference type="GO" id="GO:0051537">
    <property type="term" value="F:2 iron, 2 sulfur cluster binding"/>
    <property type="evidence" value="ECO:0007669"/>
    <property type="project" value="UniProtKB-KW"/>
</dbReference>
<dbReference type="GO" id="GO:0009055">
    <property type="term" value="F:electron transfer activity"/>
    <property type="evidence" value="ECO:0007669"/>
    <property type="project" value="UniProtKB-UniRule"/>
</dbReference>
<dbReference type="GO" id="GO:0046872">
    <property type="term" value="F:metal ion binding"/>
    <property type="evidence" value="ECO:0007669"/>
    <property type="project" value="UniProtKB-KW"/>
</dbReference>
<dbReference type="GO" id="GO:0016655">
    <property type="term" value="F:oxidoreductase activity, acting on NAD(P)H, quinone or similar compound as acceptor"/>
    <property type="evidence" value="ECO:0007669"/>
    <property type="project" value="InterPro"/>
</dbReference>
<dbReference type="GO" id="GO:0006814">
    <property type="term" value="P:sodium ion transport"/>
    <property type="evidence" value="ECO:0007669"/>
    <property type="project" value="UniProtKB-UniRule"/>
</dbReference>
<dbReference type="CDD" id="cd00207">
    <property type="entry name" value="fer2"/>
    <property type="match status" value="1"/>
</dbReference>
<dbReference type="CDD" id="cd06188">
    <property type="entry name" value="NADH_quinone_reductase"/>
    <property type="match status" value="1"/>
</dbReference>
<dbReference type="Gene3D" id="3.10.20.30">
    <property type="match status" value="1"/>
</dbReference>
<dbReference type="Gene3D" id="3.40.50.80">
    <property type="entry name" value="Nucleotide-binding domain of ferredoxin-NADP reductase (FNR) module"/>
    <property type="match status" value="1"/>
</dbReference>
<dbReference type="Gene3D" id="2.40.30.10">
    <property type="entry name" value="Translation factors"/>
    <property type="match status" value="1"/>
</dbReference>
<dbReference type="HAMAP" id="MF_00430">
    <property type="entry name" value="NqrF"/>
    <property type="match status" value="1"/>
</dbReference>
<dbReference type="InterPro" id="IPR036010">
    <property type="entry name" value="2Fe-2S_ferredoxin-like_sf"/>
</dbReference>
<dbReference type="InterPro" id="IPR001041">
    <property type="entry name" value="2Fe-2S_ferredoxin-type"/>
</dbReference>
<dbReference type="InterPro" id="IPR012675">
    <property type="entry name" value="Beta-grasp_dom_sf"/>
</dbReference>
<dbReference type="InterPro" id="IPR017927">
    <property type="entry name" value="FAD-bd_FR_type"/>
</dbReference>
<dbReference type="InterPro" id="IPR039261">
    <property type="entry name" value="FNR_nucleotide-bd"/>
</dbReference>
<dbReference type="InterPro" id="IPR010205">
    <property type="entry name" value="NqrF"/>
</dbReference>
<dbReference type="InterPro" id="IPR017938">
    <property type="entry name" value="Riboflavin_synthase-like_b-brl"/>
</dbReference>
<dbReference type="NCBIfam" id="TIGR01941">
    <property type="entry name" value="nqrF"/>
    <property type="match status" value="1"/>
</dbReference>
<dbReference type="PANTHER" id="PTHR43644">
    <property type="entry name" value="NA(+)-TRANSLOCATING NADH-QUINONE REDUCTASE SUBUNIT"/>
    <property type="match status" value="1"/>
</dbReference>
<dbReference type="PANTHER" id="PTHR43644:SF1">
    <property type="entry name" value="NAD(P)H-FLAVIN REDUCTASE"/>
    <property type="match status" value="1"/>
</dbReference>
<dbReference type="Pfam" id="PF00111">
    <property type="entry name" value="Fer2"/>
    <property type="match status" value="1"/>
</dbReference>
<dbReference type="PIRSF" id="PIRSF000044">
    <property type="entry name" value="Cis_Diol_DH_RD"/>
    <property type="match status" value="1"/>
</dbReference>
<dbReference type="SUPFAM" id="SSF54292">
    <property type="entry name" value="2Fe-2S ferredoxin-like"/>
    <property type="match status" value="1"/>
</dbReference>
<dbReference type="SUPFAM" id="SSF52343">
    <property type="entry name" value="Ferredoxin reductase-like, C-terminal NADP-linked domain"/>
    <property type="match status" value="1"/>
</dbReference>
<dbReference type="SUPFAM" id="SSF63380">
    <property type="entry name" value="Riboflavin synthase domain-like"/>
    <property type="match status" value="1"/>
</dbReference>
<dbReference type="PROSITE" id="PS51085">
    <property type="entry name" value="2FE2S_FER_2"/>
    <property type="match status" value="1"/>
</dbReference>
<dbReference type="PROSITE" id="PS51384">
    <property type="entry name" value="FAD_FR"/>
    <property type="match status" value="1"/>
</dbReference>
<comment type="function">
    <text evidence="1">NQR complex catalyzes the reduction of ubiquinone-1 to ubiquinol by two successive reactions, coupled with the transport of Na(+) ions from the cytoplasm to the periplasm. The first step is catalyzed by NqrF, which accepts electrons from NADH and reduces ubiquinone-1 to ubisemiquinone by a one-electron transfer pathway.</text>
</comment>
<comment type="catalytic activity">
    <reaction evidence="1">
        <text>a ubiquinone + n Na(+)(in) + NADH + H(+) = a ubiquinol + n Na(+)(out) + NAD(+)</text>
        <dbReference type="Rhea" id="RHEA:47748"/>
        <dbReference type="Rhea" id="RHEA-COMP:9565"/>
        <dbReference type="Rhea" id="RHEA-COMP:9566"/>
        <dbReference type="ChEBI" id="CHEBI:15378"/>
        <dbReference type="ChEBI" id="CHEBI:16389"/>
        <dbReference type="ChEBI" id="CHEBI:17976"/>
        <dbReference type="ChEBI" id="CHEBI:29101"/>
        <dbReference type="ChEBI" id="CHEBI:57540"/>
        <dbReference type="ChEBI" id="CHEBI:57945"/>
        <dbReference type="EC" id="7.2.1.1"/>
    </reaction>
</comment>
<comment type="cofactor">
    <cofactor evidence="1">
        <name>[2Fe-2S] cluster</name>
        <dbReference type="ChEBI" id="CHEBI:190135"/>
    </cofactor>
    <text evidence="1">Binds 1 [2Fe-2S] cluster.</text>
</comment>
<comment type="cofactor">
    <cofactor evidence="1">
        <name>FAD</name>
        <dbReference type="ChEBI" id="CHEBI:57692"/>
    </cofactor>
</comment>
<comment type="subunit">
    <text evidence="1">Composed of six subunits; NqrA, NqrB, NqrC, NqrD, NqrE and NqrF.</text>
</comment>
<comment type="subcellular location">
    <subcellularLocation>
        <location evidence="1">Cell inner membrane</location>
        <topology evidence="1">Single-pass membrane protein</topology>
    </subcellularLocation>
</comment>
<comment type="similarity">
    <text evidence="1">Belongs to the NqrF family.</text>
</comment>
<protein>
    <recommendedName>
        <fullName evidence="1">Na(+)-translocating NADH-quinone reductase subunit F</fullName>
        <shortName evidence="1">Na(+)-NQR subunit F</shortName>
        <shortName evidence="1">Na(+)-translocating NQR subunit F</shortName>
        <ecNumber evidence="1">7.2.1.1</ecNumber>
    </recommendedName>
    <alternativeName>
        <fullName evidence="1">NQR complex subunit F</fullName>
    </alternativeName>
    <alternativeName>
        <fullName evidence="1">NQR-1 subunit F</fullName>
    </alternativeName>
</protein>
<reference key="1">
    <citation type="journal article" date="2003" name="Nucleic Acids Res.">
        <title>Genome sequence of Chlamydophila caviae (Chlamydia psittaci GPIC): examining the role of niche-specific genes in the evolution of the Chlamydiaceae.</title>
        <authorList>
            <person name="Read T.D."/>
            <person name="Myers G.S.A."/>
            <person name="Brunham R.C."/>
            <person name="Nelson W.C."/>
            <person name="Paulsen I.T."/>
            <person name="Heidelberg J.F."/>
            <person name="Holtzapple E.K."/>
            <person name="Khouri H.M."/>
            <person name="Federova N.B."/>
            <person name="Carty H.A."/>
            <person name="Umayam L.A."/>
            <person name="Haft D.H."/>
            <person name="Peterson J.D."/>
            <person name="Beanan M.J."/>
            <person name="White O."/>
            <person name="Salzberg S.L."/>
            <person name="Hsia R.-C."/>
            <person name="McClarty G."/>
            <person name="Rank R.G."/>
            <person name="Bavoil P.M."/>
            <person name="Fraser C.M."/>
        </authorList>
    </citation>
    <scope>NUCLEOTIDE SEQUENCE [LARGE SCALE GENOMIC DNA]</scope>
    <source>
        <strain>ATCC VR-813 / DSM 19441 / 03DC25 / GPIC</strain>
    </source>
</reference>